<protein>
    <recommendedName>
        <fullName evidence="1">Cell division protein FtsQ</fullName>
    </recommendedName>
</protein>
<name>FTSQ_MYCS2</name>
<keyword id="KW-0131">Cell cycle</keyword>
<keyword id="KW-0132">Cell division</keyword>
<keyword id="KW-1003">Cell membrane</keyword>
<keyword id="KW-0472">Membrane</keyword>
<keyword id="KW-1185">Reference proteome</keyword>
<keyword id="KW-0812">Transmembrane</keyword>
<keyword id="KW-1133">Transmembrane helix</keyword>
<gene>
    <name evidence="1" type="primary">ftsQ</name>
    <name type="ordered locus">MSMEG_4225</name>
    <name type="ordered locus">MSMEI_4125</name>
</gene>
<proteinExistence type="inferred from homology"/>
<evidence type="ECO:0000255" key="1">
    <source>
        <dbReference type="HAMAP-Rule" id="MF_00911"/>
    </source>
</evidence>
<evidence type="ECO:0000255" key="2">
    <source>
        <dbReference type="PROSITE-ProRule" id="PRU01115"/>
    </source>
</evidence>
<evidence type="ECO:0000256" key="3">
    <source>
        <dbReference type="SAM" id="MobiDB-lite"/>
    </source>
</evidence>
<accession>A0R014</accession>
<accession>I7G4M7</accession>
<comment type="function">
    <text evidence="1">Essential cell division protein.</text>
</comment>
<comment type="subcellular location">
    <subcellularLocation>
        <location evidence="1">Cell membrane</location>
        <topology evidence="1">Single-pass type II membrane protein</topology>
    </subcellularLocation>
    <text evidence="1">Localizes to the division septum.</text>
</comment>
<comment type="similarity">
    <text evidence="1">Belongs to the FtsQ/DivIB family. FtsQ subfamily.</text>
</comment>
<organism>
    <name type="scientific">Mycolicibacterium smegmatis (strain ATCC 700084 / mc(2)155)</name>
    <name type="common">Mycobacterium smegmatis</name>
    <dbReference type="NCBI Taxonomy" id="246196"/>
    <lineage>
        <taxon>Bacteria</taxon>
        <taxon>Bacillati</taxon>
        <taxon>Actinomycetota</taxon>
        <taxon>Actinomycetes</taxon>
        <taxon>Mycobacteriales</taxon>
        <taxon>Mycobacteriaceae</taxon>
        <taxon>Mycolicibacterium</taxon>
    </lineage>
</organism>
<sequence length="333" mass="35307">MTGTGPHGDPAEDPAGPDDTAAETDGPAEPTEPVDASEAEMTDTTETTAQTGTTAEADASEEFEGPRRRARRERAERRAARDRAMAIEQARREAKRRAVAGALDPTKSVPRNTIRGLKVLMWAALVSVLAVALGLLLYFTPIMSARNVEVSGLAEIPQEEVLTAAAVAPGTPLLQVDTDAVAERVATIRRVATARVQREYPSTLKISIVERVPVVVKDYPDGPHLFDRDGVDFATGPAPLALPYLDADNPGPNDPATRAALDVMMALPPDVAAQVGRIAAPSVASITLTLIDGRVVVWGTDDRTQEKALKLAALLTQPGTTYDVSSPDLPTVK</sequence>
<feature type="chain" id="PRO_0000414679" description="Cell division protein FtsQ">
    <location>
        <begin position="1"/>
        <end position="333"/>
    </location>
</feature>
<feature type="topological domain" description="Cytoplasmic" evidence="1">
    <location>
        <begin position="1"/>
        <end position="118"/>
    </location>
</feature>
<feature type="transmembrane region" description="Helical" evidence="1">
    <location>
        <begin position="119"/>
        <end position="139"/>
    </location>
</feature>
<feature type="topological domain" description="Extracellular" evidence="1">
    <location>
        <begin position="140"/>
        <end position="333"/>
    </location>
</feature>
<feature type="domain" description="POTRA" evidence="2">
    <location>
        <begin position="143"/>
        <end position="211"/>
    </location>
</feature>
<feature type="region of interest" description="Disordered" evidence="3">
    <location>
        <begin position="1"/>
        <end position="99"/>
    </location>
</feature>
<feature type="compositionally biased region" description="Acidic residues" evidence="3">
    <location>
        <begin position="11"/>
        <end position="22"/>
    </location>
</feature>
<feature type="compositionally biased region" description="Low complexity" evidence="3">
    <location>
        <begin position="44"/>
        <end position="57"/>
    </location>
</feature>
<feature type="compositionally biased region" description="Basic and acidic residues" evidence="3">
    <location>
        <begin position="73"/>
        <end position="92"/>
    </location>
</feature>
<dbReference type="EMBL" id="CP000480">
    <property type="protein sequence ID" value="ABK73553.1"/>
    <property type="molecule type" value="Genomic_DNA"/>
</dbReference>
<dbReference type="EMBL" id="CP001663">
    <property type="protein sequence ID" value="AFP40582.1"/>
    <property type="molecule type" value="Genomic_DNA"/>
</dbReference>
<dbReference type="RefSeq" id="WP_011729654.1">
    <property type="nucleotide sequence ID" value="NC_008596.1"/>
</dbReference>
<dbReference type="RefSeq" id="YP_888502.1">
    <property type="nucleotide sequence ID" value="NC_008596.1"/>
</dbReference>
<dbReference type="SMR" id="A0R014"/>
<dbReference type="STRING" id="246196.MSMEG_4225"/>
<dbReference type="PaxDb" id="246196-MSMEI_4125"/>
<dbReference type="GeneID" id="93458943"/>
<dbReference type="KEGG" id="msb:LJ00_20945"/>
<dbReference type="KEGG" id="msg:MSMEI_4125"/>
<dbReference type="KEGG" id="msm:MSMEG_4225"/>
<dbReference type="PATRIC" id="fig|246196.19.peg.4145"/>
<dbReference type="eggNOG" id="COG1589">
    <property type="taxonomic scope" value="Bacteria"/>
</dbReference>
<dbReference type="OrthoDB" id="9790760at2"/>
<dbReference type="Proteomes" id="UP000000757">
    <property type="component" value="Chromosome"/>
</dbReference>
<dbReference type="Proteomes" id="UP000006158">
    <property type="component" value="Chromosome"/>
</dbReference>
<dbReference type="GO" id="GO:0032153">
    <property type="term" value="C:cell division site"/>
    <property type="evidence" value="ECO:0007669"/>
    <property type="project" value="UniProtKB-UniRule"/>
</dbReference>
<dbReference type="GO" id="GO:0005886">
    <property type="term" value="C:plasma membrane"/>
    <property type="evidence" value="ECO:0007669"/>
    <property type="project" value="UniProtKB-SubCell"/>
</dbReference>
<dbReference type="GO" id="GO:0090529">
    <property type="term" value="P:cell septum assembly"/>
    <property type="evidence" value="ECO:0007669"/>
    <property type="project" value="InterPro"/>
</dbReference>
<dbReference type="GO" id="GO:0043093">
    <property type="term" value="P:FtsZ-dependent cytokinesis"/>
    <property type="evidence" value="ECO:0007669"/>
    <property type="project" value="UniProtKB-UniRule"/>
</dbReference>
<dbReference type="Gene3D" id="3.10.20.310">
    <property type="entry name" value="membrane protein fhac"/>
    <property type="match status" value="1"/>
</dbReference>
<dbReference type="HAMAP" id="MF_00911">
    <property type="entry name" value="FtsQ_subfam"/>
    <property type="match status" value="1"/>
</dbReference>
<dbReference type="InterPro" id="IPR005548">
    <property type="entry name" value="Cell_div_FtsQ/DivIB_C"/>
</dbReference>
<dbReference type="InterPro" id="IPR026579">
    <property type="entry name" value="FtsQ"/>
</dbReference>
<dbReference type="InterPro" id="IPR050487">
    <property type="entry name" value="FtsQ_DivIB"/>
</dbReference>
<dbReference type="InterPro" id="IPR034746">
    <property type="entry name" value="POTRA"/>
</dbReference>
<dbReference type="InterPro" id="IPR013685">
    <property type="entry name" value="POTRA_FtsQ_type"/>
</dbReference>
<dbReference type="PANTHER" id="PTHR37820">
    <property type="entry name" value="CELL DIVISION PROTEIN DIVIB"/>
    <property type="match status" value="1"/>
</dbReference>
<dbReference type="PANTHER" id="PTHR37820:SF1">
    <property type="entry name" value="CELL DIVISION PROTEIN FTSQ"/>
    <property type="match status" value="1"/>
</dbReference>
<dbReference type="Pfam" id="PF03799">
    <property type="entry name" value="FtsQ_DivIB_C"/>
    <property type="match status" value="1"/>
</dbReference>
<dbReference type="Pfam" id="PF08478">
    <property type="entry name" value="POTRA_1"/>
    <property type="match status" value="1"/>
</dbReference>
<dbReference type="PROSITE" id="PS51779">
    <property type="entry name" value="POTRA"/>
    <property type="match status" value="1"/>
</dbReference>
<reference key="1">
    <citation type="submission" date="2006-10" db="EMBL/GenBank/DDBJ databases">
        <authorList>
            <person name="Fleischmann R.D."/>
            <person name="Dodson R.J."/>
            <person name="Haft D.H."/>
            <person name="Merkel J.S."/>
            <person name="Nelson W.C."/>
            <person name="Fraser C.M."/>
        </authorList>
    </citation>
    <scope>NUCLEOTIDE SEQUENCE [LARGE SCALE GENOMIC DNA]</scope>
    <source>
        <strain>ATCC 700084 / mc(2)155</strain>
    </source>
</reference>
<reference key="2">
    <citation type="journal article" date="2007" name="Genome Biol.">
        <title>Interrupted coding sequences in Mycobacterium smegmatis: authentic mutations or sequencing errors?</title>
        <authorList>
            <person name="Deshayes C."/>
            <person name="Perrodou E."/>
            <person name="Gallien S."/>
            <person name="Euphrasie D."/>
            <person name="Schaeffer C."/>
            <person name="Van-Dorsselaer A."/>
            <person name="Poch O."/>
            <person name="Lecompte O."/>
            <person name="Reyrat J.-M."/>
        </authorList>
    </citation>
    <scope>NUCLEOTIDE SEQUENCE [LARGE SCALE GENOMIC DNA]</scope>
    <source>
        <strain>ATCC 700084 / mc(2)155</strain>
    </source>
</reference>
<reference key="3">
    <citation type="journal article" date="2009" name="Genome Res.">
        <title>Ortho-proteogenomics: multiple proteomes investigation through orthology and a new MS-based protocol.</title>
        <authorList>
            <person name="Gallien S."/>
            <person name="Perrodou E."/>
            <person name="Carapito C."/>
            <person name="Deshayes C."/>
            <person name="Reyrat J.-M."/>
            <person name="Van Dorsselaer A."/>
            <person name="Poch O."/>
            <person name="Schaeffer C."/>
            <person name="Lecompte O."/>
        </authorList>
    </citation>
    <scope>NUCLEOTIDE SEQUENCE [LARGE SCALE GENOMIC DNA]</scope>
    <source>
        <strain>ATCC 700084 / mc(2)155</strain>
    </source>
</reference>